<gene>
    <name type="primary">rpl22</name>
</gene>
<proteinExistence type="inferred from homology"/>
<feature type="chain" id="PRO_0000354565" description="Large ribosomal subunit protein uL22c">
    <location>
        <begin position="1"/>
        <end position="160"/>
    </location>
</feature>
<geneLocation type="chloroplast"/>
<sequence>MITKRKKKSYTSVYALGQYISMSAHKARRVIDQIRGRSYEEALMILELMPYRGCYPIFKLVYSAAANASHNKGFKETNLVISKAEVNQGNTVKKLKPRARGRSYPIKRSTCHITIVLEDISFYQQYEEYLMYLKKPGCSNENRNLTCYDTYSSGGLWDKK</sequence>
<comment type="function">
    <text evidence="1">This protein binds specifically to 23S rRNA.</text>
</comment>
<comment type="function">
    <text evidence="1">The globular domain of the protein is located near the polypeptide exit tunnel on the outside of the subunit, while an extended beta-hairpin is found that lines the wall of the exit tunnel in the center of the 70S ribosome.</text>
</comment>
<comment type="subunit">
    <text evidence="1">Part of the 50S ribosomal subunit.</text>
</comment>
<comment type="subcellular location">
    <subcellularLocation>
        <location>Plastid</location>
        <location>Chloroplast</location>
    </subcellularLocation>
</comment>
<comment type="similarity">
    <text evidence="2">Belongs to the universal ribosomal protein uL22 family.</text>
</comment>
<reference key="1">
    <citation type="submission" date="2007-03" db="EMBL/GenBank/DDBJ databases">
        <title>Sequencing analysis of Crucihimalaya wallichii chloroplast DNA.</title>
        <authorList>
            <person name="Hosouchi T."/>
            <person name="Tsuruoka H."/>
            <person name="Kotani H."/>
        </authorList>
    </citation>
    <scope>NUCLEOTIDE SEQUENCE [LARGE SCALE GENOMIC DNA]</scope>
</reference>
<name>RK22_CRUWA</name>
<dbReference type="EMBL" id="AP009372">
    <property type="protein sequence ID" value="BAF50325.1"/>
    <property type="molecule type" value="Genomic_DNA"/>
</dbReference>
<dbReference type="RefSeq" id="YP_001123501.1">
    <property type="nucleotide sequence ID" value="NC_009271.1"/>
</dbReference>
<dbReference type="SMR" id="A4QKX0"/>
<dbReference type="GeneID" id="4962748"/>
<dbReference type="GO" id="GO:0009507">
    <property type="term" value="C:chloroplast"/>
    <property type="evidence" value="ECO:0007669"/>
    <property type="project" value="UniProtKB-SubCell"/>
</dbReference>
<dbReference type="GO" id="GO:0015934">
    <property type="term" value="C:large ribosomal subunit"/>
    <property type="evidence" value="ECO:0007669"/>
    <property type="project" value="InterPro"/>
</dbReference>
<dbReference type="GO" id="GO:0019843">
    <property type="term" value="F:rRNA binding"/>
    <property type="evidence" value="ECO:0007669"/>
    <property type="project" value="UniProtKB-UniRule"/>
</dbReference>
<dbReference type="GO" id="GO:0003735">
    <property type="term" value="F:structural constituent of ribosome"/>
    <property type="evidence" value="ECO:0007669"/>
    <property type="project" value="InterPro"/>
</dbReference>
<dbReference type="GO" id="GO:0006412">
    <property type="term" value="P:translation"/>
    <property type="evidence" value="ECO:0007669"/>
    <property type="project" value="UniProtKB-UniRule"/>
</dbReference>
<dbReference type="CDD" id="cd00336">
    <property type="entry name" value="Ribosomal_L22"/>
    <property type="match status" value="1"/>
</dbReference>
<dbReference type="FunFam" id="3.90.470.10:FF:000006">
    <property type="entry name" value="50S ribosomal protein L22, chloroplastic"/>
    <property type="match status" value="1"/>
</dbReference>
<dbReference type="Gene3D" id="3.90.470.10">
    <property type="entry name" value="Ribosomal protein L22/L17"/>
    <property type="match status" value="1"/>
</dbReference>
<dbReference type="HAMAP" id="MF_01331_B">
    <property type="entry name" value="Ribosomal_uL22_B"/>
    <property type="match status" value="1"/>
</dbReference>
<dbReference type="InterPro" id="IPR001063">
    <property type="entry name" value="Ribosomal_uL22"/>
</dbReference>
<dbReference type="InterPro" id="IPR005727">
    <property type="entry name" value="Ribosomal_uL22_bac/chlpt-type"/>
</dbReference>
<dbReference type="InterPro" id="IPR047867">
    <property type="entry name" value="Ribosomal_uL22_bac/org-type"/>
</dbReference>
<dbReference type="InterPro" id="IPR018260">
    <property type="entry name" value="Ribosomal_uL22_CS"/>
</dbReference>
<dbReference type="InterPro" id="IPR036394">
    <property type="entry name" value="Ribosomal_uL22_sf"/>
</dbReference>
<dbReference type="NCBIfam" id="TIGR01044">
    <property type="entry name" value="rplV_bact"/>
    <property type="match status" value="1"/>
</dbReference>
<dbReference type="PANTHER" id="PTHR13501">
    <property type="entry name" value="CHLOROPLAST 50S RIBOSOMAL PROTEIN L22-RELATED"/>
    <property type="match status" value="1"/>
</dbReference>
<dbReference type="PANTHER" id="PTHR13501:SF10">
    <property type="entry name" value="LARGE RIBOSOMAL SUBUNIT PROTEIN UL22M"/>
    <property type="match status" value="1"/>
</dbReference>
<dbReference type="Pfam" id="PF00237">
    <property type="entry name" value="Ribosomal_L22"/>
    <property type="match status" value="1"/>
</dbReference>
<dbReference type="SUPFAM" id="SSF54843">
    <property type="entry name" value="Ribosomal protein L22"/>
    <property type="match status" value="1"/>
</dbReference>
<dbReference type="PROSITE" id="PS00464">
    <property type="entry name" value="RIBOSOMAL_L22"/>
    <property type="match status" value="1"/>
</dbReference>
<protein>
    <recommendedName>
        <fullName evidence="2">Large ribosomal subunit protein uL22c</fullName>
    </recommendedName>
    <alternativeName>
        <fullName>50S ribosomal protein L22, chloroplastic</fullName>
    </alternativeName>
</protein>
<accession>A4QKX0</accession>
<evidence type="ECO:0000250" key="1"/>
<evidence type="ECO:0000305" key="2"/>
<organism>
    <name type="scientific">Crucihimalaya wallichii</name>
    <name type="common">Rock-cress</name>
    <name type="synonym">Arabidopsis campestris</name>
    <dbReference type="NCBI Taxonomy" id="78192"/>
    <lineage>
        <taxon>Eukaryota</taxon>
        <taxon>Viridiplantae</taxon>
        <taxon>Streptophyta</taxon>
        <taxon>Embryophyta</taxon>
        <taxon>Tracheophyta</taxon>
        <taxon>Spermatophyta</taxon>
        <taxon>Magnoliopsida</taxon>
        <taxon>eudicotyledons</taxon>
        <taxon>Gunneridae</taxon>
        <taxon>Pentapetalae</taxon>
        <taxon>rosids</taxon>
        <taxon>malvids</taxon>
        <taxon>Brassicales</taxon>
        <taxon>Brassicaceae</taxon>
        <taxon>Crucihimalayeae</taxon>
        <taxon>Crucihimalaya</taxon>
    </lineage>
</organism>
<keyword id="KW-0150">Chloroplast</keyword>
<keyword id="KW-0934">Plastid</keyword>
<keyword id="KW-0687">Ribonucleoprotein</keyword>
<keyword id="KW-0689">Ribosomal protein</keyword>
<keyword id="KW-0694">RNA-binding</keyword>
<keyword id="KW-0699">rRNA-binding</keyword>